<evidence type="ECO:0000255" key="1">
    <source>
        <dbReference type="HAMAP-Rule" id="MF_00382"/>
    </source>
</evidence>
<evidence type="ECO:0000305" key="2"/>
<proteinExistence type="inferred from homology"/>
<sequence>MARVKRGVIARARHKKILKQAKGYYGARSRVYRVAFQAVIKAGQYAYRDRRQRKRQFRQLWIARINAAARQNGISYSKFINGLKKASVEIDRKILADIAVFDKVAFTALVEKAKAALA</sequence>
<gene>
    <name evidence="1" type="primary">rplT</name>
    <name type="ordered locus">ECIAI39_1338</name>
</gene>
<keyword id="KW-0687">Ribonucleoprotein</keyword>
<keyword id="KW-0689">Ribosomal protein</keyword>
<keyword id="KW-0694">RNA-binding</keyword>
<keyword id="KW-0699">rRNA-binding</keyword>
<name>RL20_ECO7I</name>
<reference key="1">
    <citation type="journal article" date="2009" name="PLoS Genet.">
        <title>Organised genome dynamics in the Escherichia coli species results in highly diverse adaptive paths.</title>
        <authorList>
            <person name="Touchon M."/>
            <person name="Hoede C."/>
            <person name="Tenaillon O."/>
            <person name="Barbe V."/>
            <person name="Baeriswyl S."/>
            <person name="Bidet P."/>
            <person name="Bingen E."/>
            <person name="Bonacorsi S."/>
            <person name="Bouchier C."/>
            <person name="Bouvet O."/>
            <person name="Calteau A."/>
            <person name="Chiapello H."/>
            <person name="Clermont O."/>
            <person name="Cruveiller S."/>
            <person name="Danchin A."/>
            <person name="Diard M."/>
            <person name="Dossat C."/>
            <person name="Karoui M.E."/>
            <person name="Frapy E."/>
            <person name="Garry L."/>
            <person name="Ghigo J.M."/>
            <person name="Gilles A.M."/>
            <person name="Johnson J."/>
            <person name="Le Bouguenec C."/>
            <person name="Lescat M."/>
            <person name="Mangenot S."/>
            <person name="Martinez-Jehanne V."/>
            <person name="Matic I."/>
            <person name="Nassif X."/>
            <person name="Oztas S."/>
            <person name="Petit M.A."/>
            <person name="Pichon C."/>
            <person name="Rouy Z."/>
            <person name="Ruf C.S."/>
            <person name="Schneider D."/>
            <person name="Tourret J."/>
            <person name="Vacherie B."/>
            <person name="Vallenet D."/>
            <person name="Medigue C."/>
            <person name="Rocha E.P.C."/>
            <person name="Denamur E."/>
        </authorList>
    </citation>
    <scope>NUCLEOTIDE SEQUENCE [LARGE SCALE GENOMIC DNA]</scope>
    <source>
        <strain>IAI39 / ExPEC</strain>
    </source>
</reference>
<protein>
    <recommendedName>
        <fullName evidence="1">Large ribosomal subunit protein bL20</fullName>
    </recommendedName>
    <alternativeName>
        <fullName evidence="2">50S ribosomal protein L20</fullName>
    </alternativeName>
</protein>
<accession>B7NT61</accession>
<organism>
    <name type="scientific">Escherichia coli O7:K1 (strain IAI39 / ExPEC)</name>
    <dbReference type="NCBI Taxonomy" id="585057"/>
    <lineage>
        <taxon>Bacteria</taxon>
        <taxon>Pseudomonadati</taxon>
        <taxon>Pseudomonadota</taxon>
        <taxon>Gammaproteobacteria</taxon>
        <taxon>Enterobacterales</taxon>
        <taxon>Enterobacteriaceae</taxon>
        <taxon>Escherichia</taxon>
    </lineage>
</organism>
<feature type="chain" id="PRO_1000122310" description="Large ribosomal subunit protein bL20">
    <location>
        <begin position="1"/>
        <end position="118"/>
    </location>
</feature>
<dbReference type="EMBL" id="CU928164">
    <property type="protein sequence ID" value="CAR17472.1"/>
    <property type="molecule type" value="Genomic_DNA"/>
</dbReference>
<dbReference type="RefSeq" id="WP_000124850.1">
    <property type="nucleotide sequence ID" value="NC_011750.1"/>
</dbReference>
<dbReference type="RefSeq" id="YP_002407345.1">
    <property type="nucleotide sequence ID" value="NC_011750.1"/>
</dbReference>
<dbReference type="SMR" id="B7NT61"/>
<dbReference type="STRING" id="585057.ECIAI39_1338"/>
<dbReference type="GeneID" id="98388757"/>
<dbReference type="KEGG" id="ect:ECIAI39_1338"/>
<dbReference type="PATRIC" id="fig|585057.6.peg.1400"/>
<dbReference type="HOGENOM" id="CLU_123265_0_1_6"/>
<dbReference type="Proteomes" id="UP000000749">
    <property type="component" value="Chromosome"/>
</dbReference>
<dbReference type="GO" id="GO:1990904">
    <property type="term" value="C:ribonucleoprotein complex"/>
    <property type="evidence" value="ECO:0007669"/>
    <property type="project" value="UniProtKB-KW"/>
</dbReference>
<dbReference type="GO" id="GO:0005840">
    <property type="term" value="C:ribosome"/>
    <property type="evidence" value="ECO:0007669"/>
    <property type="project" value="UniProtKB-KW"/>
</dbReference>
<dbReference type="GO" id="GO:0019843">
    <property type="term" value="F:rRNA binding"/>
    <property type="evidence" value="ECO:0007669"/>
    <property type="project" value="UniProtKB-UniRule"/>
</dbReference>
<dbReference type="GO" id="GO:0003735">
    <property type="term" value="F:structural constituent of ribosome"/>
    <property type="evidence" value="ECO:0007669"/>
    <property type="project" value="InterPro"/>
</dbReference>
<dbReference type="GO" id="GO:0000027">
    <property type="term" value="P:ribosomal large subunit assembly"/>
    <property type="evidence" value="ECO:0007669"/>
    <property type="project" value="UniProtKB-UniRule"/>
</dbReference>
<dbReference type="GO" id="GO:0006412">
    <property type="term" value="P:translation"/>
    <property type="evidence" value="ECO:0007669"/>
    <property type="project" value="InterPro"/>
</dbReference>
<dbReference type="CDD" id="cd07026">
    <property type="entry name" value="Ribosomal_L20"/>
    <property type="match status" value="1"/>
</dbReference>
<dbReference type="FunFam" id="1.10.1900.20:FF:000001">
    <property type="entry name" value="50S ribosomal protein L20"/>
    <property type="match status" value="1"/>
</dbReference>
<dbReference type="Gene3D" id="6.10.160.10">
    <property type="match status" value="1"/>
</dbReference>
<dbReference type="Gene3D" id="1.10.1900.20">
    <property type="entry name" value="Ribosomal protein L20"/>
    <property type="match status" value="1"/>
</dbReference>
<dbReference type="HAMAP" id="MF_00382">
    <property type="entry name" value="Ribosomal_bL20"/>
    <property type="match status" value="1"/>
</dbReference>
<dbReference type="InterPro" id="IPR005813">
    <property type="entry name" value="Ribosomal_bL20"/>
</dbReference>
<dbReference type="InterPro" id="IPR049946">
    <property type="entry name" value="RIBOSOMAL_L20_CS"/>
</dbReference>
<dbReference type="InterPro" id="IPR035566">
    <property type="entry name" value="Ribosomal_protein_bL20_C"/>
</dbReference>
<dbReference type="NCBIfam" id="TIGR01032">
    <property type="entry name" value="rplT_bact"/>
    <property type="match status" value="1"/>
</dbReference>
<dbReference type="PANTHER" id="PTHR10986">
    <property type="entry name" value="39S RIBOSOMAL PROTEIN L20"/>
    <property type="match status" value="1"/>
</dbReference>
<dbReference type="Pfam" id="PF00453">
    <property type="entry name" value="Ribosomal_L20"/>
    <property type="match status" value="1"/>
</dbReference>
<dbReference type="PRINTS" id="PR00062">
    <property type="entry name" value="RIBOSOMALL20"/>
</dbReference>
<dbReference type="SUPFAM" id="SSF74731">
    <property type="entry name" value="Ribosomal protein L20"/>
    <property type="match status" value="1"/>
</dbReference>
<dbReference type="PROSITE" id="PS00937">
    <property type="entry name" value="RIBOSOMAL_L20"/>
    <property type="match status" value="1"/>
</dbReference>
<comment type="function">
    <text evidence="1">Binds directly to 23S ribosomal RNA and is necessary for the in vitro assembly process of the 50S ribosomal subunit. It is not involved in the protein synthesizing functions of that subunit.</text>
</comment>
<comment type="similarity">
    <text evidence="1">Belongs to the bacterial ribosomal protein bL20 family.</text>
</comment>